<gene>
    <name type="primary">Gucy2f</name>
    <name type="synonym">Guc2f</name>
</gene>
<organism>
    <name type="scientific">Rattus norvegicus</name>
    <name type="common">Rat</name>
    <dbReference type="NCBI Taxonomy" id="10116"/>
    <lineage>
        <taxon>Eukaryota</taxon>
        <taxon>Metazoa</taxon>
        <taxon>Chordata</taxon>
        <taxon>Craniata</taxon>
        <taxon>Vertebrata</taxon>
        <taxon>Euteleostomi</taxon>
        <taxon>Mammalia</taxon>
        <taxon>Eutheria</taxon>
        <taxon>Euarchontoglires</taxon>
        <taxon>Glires</taxon>
        <taxon>Rodentia</taxon>
        <taxon>Myomorpha</taxon>
        <taxon>Muroidea</taxon>
        <taxon>Muridae</taxon>
        <taxon>Murinae</taxon>
        <taxon>Rattus</taxon>
    </lineage>
</organism>
<feature type="signal peptide" evidence="5">
    <location>
        <begin position="1"/>
        <end position="50"/>
    </location>
</feature>
<feature type="chain" id="PRO_0000012387" description="Retinal guanylyl cyclase 2">
    <location>
        <begin position="51"/>
        <end position="1108"/>
    </location>
</feature>
<feature type="topological domain" description="Extracellular" evidence="5">
    <location>
        <begin position="51"/>
        <end position="465"/>
    </location>
</feature>
<feature type="transmembrane region" description="Helical" evidence="5">
    <location>
        <begin position="466"/>
        <end position="490"/>
    </location>
</feature>
<feature type="topological domain" description="Cytoplasmic" evidence="5">
    <location>
        <begin position="491"/>
        <end position="1108"/>
    </location>
</feature>
<feature type="domain" description="Protein kinase" evidence="7">
    <location>
        <begin position="532"/>
        <end position="812"/>
    </location>
</feature>
<feature type="domain" description="Guanylate cyclase" evidence="6">
    <location>
        <begin position="884"/>
        <end position="1014"/>
    </location>
</feature>
<feature type="disulfide bond" evidence="1">
    <location>
        <begin position="104"/>
        <end position="132"/>
    </location>
</feature>
<feature type="disulfide bond" description="Interchain" evidence="1">
    <location>
        <position position="452"/>
    </location>
</feature>
<feature type="disulfide bond" description="Interchain" evidence="1">
    <location>
        <position position="460"/>
    </location>
</feature>
<keyword id="KW-0966">Cell projection</keyword>
<keyword id="KW-0141">cGMP biosynthesis</keyword>
<keyword id="KW-1015">Disulfide bond</keyword>
<keyword id="KW-0342">GTP-binding</keyword>
<keyword id="KW-0456">Lyase</keyword>
<keyword id="KW-0472">Membrane</keyword>
<keyword id="KW-0547">Nucleotide-binding</keyword>
<keyword id="KW-1185">Reference proteome</keyword>
<keyword id="KW-0716">Sensory transduction</keyword>
<keyword id="KW-0732">Signal</keyword>
<keyword id="KW-0812">Transmembrane</keyword>
<keyword id="KW-1133">Transmembrane helix</keyword>
<keyword id="KW-0844">Vision</keyword>
<protein>
    <recommendedName>
        <fullName>Retinal guanylyl cyclase 2</fullName>
        <shortName>RETGC-2</shortName>
        <ecNumber evidence="8">4.6.1.2</ecNumber>
    </recommendedName>
    <alternativeName>
        <fullName>Guanylate cyclase 2F, retinal</fullName>
    </alternativeName>
    <alternativeName>
        <fullName>Guanylate cyclase F</fullName>
        <shortName>GC-F</shortName>
    </alternativeName>
    <alternativeName>
        <fullName>Rod outer segment membrane guanylate cyclase 2</fullName>
        <shortName>ROS-GC2</shortName>
    </alternativeName>
</protein>
<sequence>MFLGPWPFSRLLSWFAISSRLSGQHGLTSSKFLRYLCLLALLPLIWWGQALPYKIGVIGPWTCDPFFSKALPEVAAALAIERISRDMSFDRSYSFEYVILNEDCQTSKALTSFISHQQMASGFVGPANPGYCEAASLLGNSWDKGIFSWACVNHELDNKHSYPTFSRTLPSPIRVLVTVMKYFQWAHAGVISSDEDIWVHTANQVSSALRSHGLPVGVVLTSGQDSRSIQKALQQIRQADRIRIIIMCMHSALIGGETQTHFLELAHDLKMTDGTYVFVPYDVLLYSLPYKHSPYQVLRNNQKLREAYDAVLTITVESHEKTFYEAFTEAAAGGEIPEKLDSHQVSPLFGTIYNSIYFIAQAMSNALKENGQASAASLTRHSRNMQFYGFNQLIRTDSNGNGISEYVILDTNGKEWELRGTYTVDMETELLRFRGTPIHFPGGRPTSADAKCWFAQGKICQGGIDPALAMMVCFALLLALLSINGFAYFIRRRINKIQLIKGPNRILLTLEDVTFINPHFGSKRGSRASVSFQIISEVQSGRSPRLSFSSGSLTPATYENSNIAIYQGDWVWLKKFPPGDFGDIKSIKSSASDVFEMMKDLRHENVNPLLGFFYDSGMFAIVSEFCSRRSLEDILTQDDVKLDWMFKSSLLLDLIKGMKYLHHREFIHGRLKSRNCVVDGRFVLKVTDYGFNNILEMLRLSEEEPSEEELLWTAPELLRAPGGIRLGSFAGDVYSFAIIMQEVMVRGAPFCMMDLSAKEVIDRLKMPPPVYRPVVSPEFAPPECLQLMKQCWAEAAEQRPTFDEIFNQFKTFNKGKKTNIIDSMLRMLEQYSSNLEDLIRERTEELEIEKQKTEKLLTQMLPPSVAESLKKGCTVEPEGFDLVTLYFSDIVGFTTISAMSEPIEVVDLLNDLYTLFDAIIGSHDVYKVETIGDAYMVASGLPKRNGSRHAAEIANMSLDILSSVGTFKMRHMPEVPVRIRIGLHTGPVVAGVVGLTMPRYCLFGDTVNTASRMESTGLPYRIHVSLSTVTILRTLSEGYEVELRGRTELKGKGTEETFWLVGKKGFTKPLPVPPPVGKDGQVGHGLQPAEIAAFQRRKAERQLVRNKP</sequence>
<proteinExistence type="evidence at protein level"/>
<reference key="1">
    <citation type="journal article" date="1995" name="Proc. Natl. Acad. Sci. U.S.A.">
        <title>Two membrane forms of guanylyl cyclase found in the eye.</title>
        <authorList>
            <person name="Yang R.-B."/>
            <person name="Foster D.C."/>
            <person name="Garbers D.L."/>
            <person name="Fuelle H.-J."/>
        </authorList>
    </citation>
    <scope>NUCLEOTIDE SEQUENCE [MRNA]</scope>
    <scope>TISSUE SPECIFICITY</scope>
    <scope>CATALYTIC ACTIVITY</scope>
    <scope>SUBCELLULAR LOCATION</scope>
    <scope>FUNCTION</scope>
    <source>
        <strain>Sprague-Dawley</strain>
        <tissue>Eye</tissue>
    </source>
</reference>
<reference key="2">
    <citation type="journal article" date="1997" name="J. Biol. Chem.">
        <title>Two eye guanylyl cyclases are expressed in the same photoreceptor cells and form homomers in preference to heteromers.</title>
        <authorList>
            <person name="Yang R.B."/>
            <person name="Garbers D.L."/>
        </authorList>
    </citation>
    <scope>SUBUNIT</scope>
    <scope>TISSUE SPECIFICITY</scope>
    <scope>SUBCELLULAR LOCATION</scope>
</reference>
<name>GUC2F_RAT</name>
<dbReference type="EC" id="4.6.1.2" evidence="8"/>
<dbReference type="EMBL" id="L36030">
    <property type="protein sequence ID" value="AAA65511.1"/>
    <property type="molecule type" value="mRNA"/>
</dbReference>
<dbReference type="PIR" id="B55915">
    <property type="entry name" value="B55915"/>
</dbReference>
<dbReference type="RefSeq" id="NP_446283.1">
    <property type="nucleotide sequence ID" value="NM_053831.2"/>
</dbReference>
<dbReference type="SMR" id="P51842"/>
<dbReference type="FunCoup" id="P51842">
    <property type="interactions" value="10"/>
</dbReference>
<dbReference type="STRING" id="10116.ENSRNOP00000049500"/>
<dbReference type="PhosphoSitePlus" id="P51842"/>
<dbReference type="PaxDb" id="10116-ENSRNOP00000049500"/>
<dbReference type="Ensembl" id="ENSRNOT00000046804.3">
    <property type="protein sequence ID" value="ENSRNOP00000049500.2"/>
    <property type="gene ID" value="ENSRNOG00000019086.5"/>
</dbReference>
<dbReference type="GeneID" id="116556"/>
<dbReference type="KEGG" id="rno:116556"/>
<dbReference type="AGR" id="RGD:620439"/>
<dbReference type="CTD" id="2986"/>
<dbReference type="RGD" id="620439">
    <property type="gene designation" value="Gucy2f"/>
</dbReference>
<dbReference type="eggNOG" id="KOG1023">
    <property type="taxonomic scope" value="Eukaryota"/>
</dbReference>
<dbReference type="GeneTree" id="ENSGT00940000162146"/>
<dbReference type="HOGENOM" id="CLU_001072_1_0_1"/>
<dbReference type="InParanoid" id="P51842"/>
<dbReference type="OMA" id="QDSQSMR"/>
<dbReference type="OrthoDB" id="1890790at2759"/>
<dbReference type="PhylomeDB" id="P51842"/>
<dbReference type="TreeFam" id="TF106338"/>
<dbReference type="Reactome" id="R-RNO-2514859">
    <property type="pathway name" value="Inactivation, recovery and regulation of the phototransduction cascade"/>
</dbReference>
<dbReference type="PRO" id="PR:P51842"/>
<dbReference type="Proteomes" id="UP000002494">
    <property type="component" value="Chromosome X"/>
</dbReference>
<dbReference type="GO" id="GO:0005886">
    <property type="term" value="C:plasma membrane"/>
    <property type="evidence" value="ECO:0000314"/>
    <property type="project" value="UniProtKB"/>
</dbReference>
<dbReference type="GO" id="GO:0120200">
    <property type="term" value="C:rod photoreceptor outer segment"/>
    <property type="evidence" value="ECO:0000250"/>
    <property type="project" value="UniProtKB"/>
</dbReference>
<dbReference type="GO" id="GO:0005524">
    <property type="term" value="F:ATP binding"/>
    <property type="evidence" value="ECO:0007669"/>
    <property type="project" value="InterPro"/>
</dbReference>
<dbReference type="GO" id="GO:0005525">
    <property type="term" value="F:GTP binding"/>
    <property type="evidence" value="ECO:0007669"/>
    <property type="project" value="UniProtKB-KW"/>
</dbReference>
<dbReference type="GO" id="GO:0004383">
    <property type="term" value="F:guanylate cyclase activity"/>
    <property type="evidence" value="ECO:0000314"/>
    <property type="project" value="RGD"/>
</dbReference>
<dbReference type="GO" id="GO:0042802">
    <property type="term" value="F:identical protein binding"/>
    <property type="evidence" value="ECO:0000353"/>
    <property type="project" value="RGD"/>
</dbReference>
<dbReference type="GO" id="GO:0001653">
    <property type="term" value="F:peptide receptor activity"/>
    <property type="evidence" value="ECO:0000318"/>
    <property type="project" value="GO_Central"/>
</dbReference>
<dbReference type="GO" id="GO:0004672">
    <property type="term" value="F:protein kinase activity"/>
    <property type="evidence" value="ECO:0007669"/>
    <property type="project" value="InterPro"/>
</dbReference>
<dbReference type="GO" id="GO:0044877">
    <property type="term" value="F:protein-containing complex binding"/>
    <property type="evidence" value="ECO:0000353"/>
    <property type="project" value="RGD"/>
</dbReference>
<dbReference type="GO" id="GO:0006182">
    <property type="term" value="P:cGMP biosynthetic process"/>
    <property type="evidence" value="ECO:0000318"/>
    <property type="project" value="GO_Central"/>
</dbReference>
<dbReference type="GO" id="GO:0019934">
    <property type="term" value="P:cGMP-mediated signaling"/>
    <property type="evidence" value="ECO:0000314"/>
    <property type="project" value="RGD"/>
</dbReference>
<dbReference type="GO" id="GO:0050908">
    <property type="term" value="P:detection of light stimulus involved in visual perception"/>
    <property type="evidence" value="ECO:0000266"/>
    <property type="project" value="RGD"/>
</dbReference>
<dbReference type="GO" id="GO:0007168">
    <property type="term" value="P:receptor guanylyl cyclase signaling pathway"/>
    <property type="evidence" value="ECO:0000318"/>
    <property type="project" value="GO_Central"/>
</dbReference>
<dbReference type="CDD" id="cd07302">
    <property type="entry name" value="CHD"/>
    <property type="match status" value="1"/>
</dbReference>
<dbReference type="CDD" id="cd06371">
    <property type="entry name" value="PBP1_sensory_GC_DEF-like"/>
    <property type="match status" value="1"/>
</dbReference>
<dbReference type="FunFam" id="1.10.510.10:FF:000404">
    <property type="entry name" value="Guanylate cyclase"/>
    <property type="match status" value="1"/>
</dbReference>
<dbReference type="FunFam" id="3.30.70.1230:FF:000013">
    <property type="entry name" value="Guanylate cyclase"/>
    <property type="match status" value="1"/>
</dbReference>
<dbReference type="FunFam" id="3.40.50.2300:FF:000114">
    <property type="entry name" value="Guanylate cyclase"/>
    <property type="match status" value="1"/>
</dbReference>
<dbReference type="Gene3D" id="3.40.50.2300">
    <property type="match status" value="2"/>
</dbReference>
<dbReference type="Gene3D" id="3.30.70.1230">
    <property type="entry name" value="Nucleotide cyclase"/>
    <property type="match status" value="1"/>
</dbReference>
<dbReference type="Gene3D" id="1.10.510.10">
    <property type="entry name" value="Transferase(Phosphotransferase) domain 1"/>
    <property type="match status" value="1"/>
</dbReference>
<dbReference type="InterPro" id="IPR001054">
    <property type="entry name" value="A/G_cyclase"/>
</dbReference>
<dbReference type="InterPro" id="IPR018297">
    <property type="entry name" value="A/G_cyclase_CS"/>
</dbReference>
<dbReference type="InterPro" id="IPR001828">
    <property type="entry name" value="ANF_lig-bd_rcpt"/>
</dbReference>
<dbReference type="InterPro" id="IPR050401">
    <property type="entry name" value="Cyclic_nucleotide_synthase"/>
</dbReference>
<dbReference type="InterPro" id="IPR011645">
    <property type="entry name" value="HNOB_dom_associated"/>
</dbReference>
<dbReference type="InterPro" id="IPR011009">
    <property type="entry name" value="Kinase-like_dom_sf"/>
</dbReference>
<dbReference type="InterPro" id="IPR029787">
    <property type="entry name" value="Nucleotide_cyclase"/>
</dbReference>
<dbReference type="InterPro" id="IPR028082">
    <property type="entry name" value="Peripla_BP_I"/>
</dbReference>
<dbReference type="InterPro" id="IPR000719">
    <property type="entry name" value="Prot_kinase_dom"/>
</dbReference>
<dbReference type="InterPro" id="IPR001245">
    <property type="entry name" value="Ser-Thr/Tyr_kinase_cat_dom"/>
</dbReference>
<dbReference type="PANTHER" id="PTHR11920">
    <property type="entry name" value="GUANYLYL CYCLASE"/>
    <property type="match status" value="1"/>
</dbReference>
<dbReference type="PANTHER" id="PTHR11920:SF349">
    <property type="entry name" value="RETINAL GUANYLYL CYCLASE 2"/>
    <property type="match status" value="1"/>
</dbReference>
<dbReference type="Pfam" id="PF01094">
    <property type="entry name" value="ANF_receptor"/>
    <property type="match status" value="1"/>
</dbReference>
<dbReference type="Pfam" id="PF00211">
    <property type="entry name" value="Guanylate_cyc"/>
    <property type="match status" value="1"/>
</dbReference>
<dbReference type="Pfam" id="PF07701">
    <property type="entry name" value="HNOBA"/>
    <property type="match status" value="1"/>
</dbReference>
<dbReference type="Pfam" id="PF07714">
    <property type="entry name" value="PK_Tyr_Ser-Thr"/>
    <property type="match status" value="1"/>
</dbReference>
<dbReference type="SMART" id="SM00044">
    <property type="entry name" value="CYCc"/>
    <property type="match status" value="1"/>
</dbReference>
<dbReference type="SUPFAM" id="SSF55073">
    <property type="entry name" value="Nucleotide cyclase"/>
    <property type="match status" value="1"/>
</dbReference>
<dbReference type="SUPFAM" id="SSF53822">
    <property type="entry name" value="Periplasmic binding protein-like I"/>
    <property type="match status" value="1"/>
</dbReference>
<dbReference type="SUPFAM" id="SSF56112">
    <property type="entry name" value="Protein kinase-like (PK-like)"/>
    <property type="match status" value="1"/>
</dbReference>
<dbReference type="PROSITE" id="PS00452">
    <property type="entry name" value="GUANYLATE_CYCLASE_1"/>
    <property type="match status" value="1"/>
</dbReference>
<dbReference type="PROSITE" id="PS50125">
    <property type="entry name" value="GUANYLATE_CYCLASE_2"/>
    <property type="match status" value="1"/>
</dbReference>
<dbReference type="PROSITE" id="PS50011">
    <property type="entry name" value="PROTEIN_KINASE_DOM"/>
    <property type="match status" value="1"/>
</dbReference>
<evidence type="ECO:0000250" key="1"/>
<evidence type="ECO:0000250" key="2">
    <source>
        <dbReference type="UniProtKB" id="O02740"/>
    </source>
</evidence>
<evidence type="ECO:0000250" key="3">
    <source>
        <dbReference type="UniProtKB" id="P51841"/>
    </source>
</evidence>
<evidence type="ECO:0000250" key="4">
    <source>
        <dbReference type="UniProtKB" id="Q5SDA5"/>
    </source>
</evidence>
<evidence type="ECO:0000255" key="5"/>
<evidence type="ECO:0000255" key="6">
    <source>
        <dbReference type="PROSITE-ProRule" id="PRU00099"/>
    </source>
</evidence>
<evidence type="ECO:0000255" key="7">
    <source>
        <dbReference type="PROSITE-ProRule" id="PRU00159"/>
    </source>
</evidence>
<evidence type="ECO:0000269" key="8">
    <source>
    </source>
</evidence>
<evidence type="ECO:0000269" key="9">
    <source>
    </source>
</evidence>
<accession>P51842</accession>
<comment type="function">
    <text evidence="4 8">Responsible for the synthesis of cyclic GMP (cGMP) in rods and cones of photoreceptors. Plays an essential role in phototransduction, by mediating cGMP replenishment (PubMed:7831337). May also participate in the trafficking of membrane-asociated proteins to the photoreceptor outer segment membrane (By similarity).</text>
</comment>
<comment type="catalytic activity">
    <reaction evidence="8">
        <text>GTP = 3',5'-cyclic GMP + diphosphate</text>
        <dbReference type="Rhea" id="RHEA:13665"/>
        <dbReference type="ChEBI" id="CHEBI:33019"/>
        <dbReference type="ChEBI" id="CHEBI:37565"/>
        <dbReference type="ChEBI" id="CHEBI:57746"/>
        <dbReference type="EC" id="4.6.1.2"/>
    </reaction>
</comment>
<comment type="activity regulation">
    <text evidence="2 3">Activated by GUCA1B when free calcium ions concentration is low, and inhibited by GUCA1B when free calcium ions concentration is high (By similarity). Inhibited by RD3 (By similarity).</text>
</comment>
<comment type="subunit">
    <text evidence="4 9">Homodimer (PubMed:9153227). Interacts with RD3; promotes the exit of GUCY2F from the endoplasmic reticulum and its trafficking to the photoreceptor outer segments (By similarity).</text>
</comment>
<comment type="subcellular location">
    <subcellularLocation>
        <location evidence="8">Membrane</location>
        <topology>Single-pass type I membrane protein</topology>
    </subcellularLocation>
    <subcellularLocation>
        <location evidence="2">Photoreceptor outer segment membrane</location>
        <topology evidence="5">Single-pass type I membrane protein</topology>
    </subcellularLocation>
</comment>
<comment type="tissue specificity">
    <text evidence="8">Expressed only in the eye.</text>
</comment>
<comment type="domain">
    <text>The protein kinase domain is predicted to be catalytically inactive.</text>
</comment>
<comment type="PTM">
    <text>There are 9 conserved cysteine residues in sensory guanylate cyclases, 6 in the extracellular domain, which may be involved in intra- or interchain disulfide bonds.</text>
</comment>
<comment type="similarity">
    <text evidence="6">Belongs to the adenylyl cyclase class-4/guanylyl cyclase family.</text>
</comment>